<evidence type="ECO:0000255" key="1">
    <source>
        <dbReference type="HAMAP-Rule" id="MF_00012"/>
    </source>
</evidence>
<reference key="1">
    <citation type="journal article" date="2003" name="Lancet">
        <title>Sequencing and analysis of the genome of the Whipple's disease bacterium Tropheryma whipplei.</title>
        <authorList>
            <person name="Bentley S.D."/>
            <person name="Maiwald M."/>
            <person name="Murphy L.D."/>
            <person name="Pallen M.J."/>
            <person name="Yeats C.A."/>
            <person name="Dover L.G."/>
            <person name="Norbertczak H.T."/>
            <person name="Besra G.S."/>
            <person name="Quail M.A."/>
            <person name="Harris D.E."/>
            <person name="von Herbay A."/>
            <person name="Goble A."/>
            <person name="Rutter S."/>
            <person name="Squares R."/>
            <person name="Squares S."/>
            <person name="Barrell B.G."/>
            <person name="Parkhill J."/>
            <person name="Relman D.A."/>
        </authorList>
    </citation>
    <scope>NUCLEOTIDE SEQUENCE [LARGE SCALE GENOMIC DNA]</scope>
    <source>
        <strain>TW08/27</strain>
    </source>
</reference>
<keyword id="KW-0001">2Fe-2S</keyword>
<keyword id="KW-0028">Amino-acid biosynthesis</keyword>
<keyword id="KW-0100">Branched-chain amino acid biosynthesis</keyword>
<keyword id="KW-0408">Iron</keyword>
<keyword id="KW-0411">Iron-sulfur</keyword>
<keyword id="KW-0456">Lyase</keyword>
<keyword id="KW-0460">Magnesium</keyword>
<keyword id="KW-0479">Metal-binding</keyword>
<comment type="function">
    <text evidence="1">Functions in the biosynthesis of branched-chain amino acids. Catalyzes the dehydration of (2R,3R)-2,3-dihydroxy-3-methylpentanoate (2,3-dihydroxy-3-methylvalerate) into 2-oxo-3-methylpentanoate (2-oxo-3-methylvalerate) and of (2R)-2,3-dihydroxy-3-methylbutanoate (2,3-dihydroxyisovalerate) into 2-oxo-3-methylbutanoate (2-oxoisovalerate), the penultimate precursor to L-isoleucine and L-valine, respectively.</text>
</comment>
<comment type="catalytic activity">
    <reaction evidence="1">
        <text>(2R)-2,3-dihydroxy-3-methylbutanoate = 3-methyl-2-oxobutanoate + H2O</text>
        <dbReference type="Rhea" id="RHEA:24809"/>
        <dbReference type="ChEBI" id="CHEBI:11851"/>
        <dbReference type="ChEBI" id="CHEBI:15377"/>
        <dbReference type="ChEBI" id="CHEBI:49072"/>
        <dbReference type="EC" id="4.2.1.9"/>
    </reaction>
    <physiologicalReaction direction="left-to-right" evidence="1">
        <dbReference type="Rhea" id="RHEA:24810"/>
    </physiologicalReaction>
</comment>
<comment type="catalytic activity">
    <reaction evidence="1">
        <text>(2R,3R)-2,3-dihydroxy-3-methylpentanoate = (S)-3-methyl-2-oxopentanoate + H2O</text>
        <dbReference type="Rhea" id="RHEA:27694"/>
        <dbReference type="ChEBI" id="CHEBI:15377"/>
        <dbReference type="ChEBI" id="CHEBI:35146"/>
        <dbReference type="ChEBI" id="CHEBI:49258"/>
        <dbReference type="EC" id="4.2.1.9"/>
    </reaction>
    <physiologicalReaction direction="left-to-right" evidence="1">
        <dbReference type="Rhea" id="RHEA:27695"/>
    </physiologicalReaction>
</comment>
<comment type="cofactor">
    <cofactor evidence="1">
        <name>[2Fe-2S] cluster</name>
        <dbReference type="ChEBI" id="CHEBI:190135"/>
    </cofactor>
    <text evidence="1">Binds 1 [2Fe-2S] cluster per subunit. This cluster acts as a Lewis acid cofactor.</text>
</comment>
<comment type="cofactor">
    <cofactor evidence="1">
        <name>Mg(2+)</name>
        <dbReference type="ChEBI" id="CHEBI:18420"/>
    </cofactor>
</comment>
<comment type="pathway">
    <text evidence="1">Amino-acid biosynthesis; L-isoleucine biosynthesis; L-isoleucine from 2-oxobutanoate: step 3/4.</text>
</comment>
<comment type="pathway">
    <text evidence="1">Amino-acid biosynthesis; L-valine biosynthesis; L-valine from pyruvate: step 3/4.</text>
</comment>
<comment type="subunit">
    <text evidence="1">Homodimer.</text>
</comment>
<comment type="similarity">
    <text evidence="1">Belongs to the IlvD/Edd family.</text>
</comment>
<proteinExistence type="inferred from homology"/>
<name>ILVD_TROW8</name>
<dbReference type="EC" id="4.2.1.9" evidence="1"/>
<dbReference type="EMBL" id="BX251411">
    <property type="protein sequence ID" value="CAD67234.1"/>
    <property type="molecule type" value="Genomic_DNA"/>
</dbReference>
<dbReference type="SMR" id="Q83HI6"/>
<dbReference type="KEGG" id="tws:TW568"/>
<dbReference type="HOGENOM" id="CLU_014271_4_2_11"/>
<dbReference type="UniPathway" id="UPA00047">
    <property type="reaction ID" value="UER00057"/>
</dbReference>
<dbReference type="UniPathway" id="UPA00049">
    <property type="reaction ID" value="UER00061"/>
</dbReference>
<dbReference type="GO" id="GO:0051537">
    <property type="term" value="F:2 iron, 2 sulfur cluster binding"/>
    <property type="evidence" value="ECO:0007669"/>
    <property type="project" value="UniProtKB-UniRule"/>
</dbReference>
<dbReference type="GO" id="GO:0004160">
    <property type="term" value="F:dihydroxy-acid dehydratase activity"/>
    <property type="evidence" value="ECO:0007669"/>
    <property type="project" value="UniProtKB-UniRule"/>
</dbReference>
<dbReference type="GO" id="GO:0000287">
    <property type="term" value="F:magnesium ion binding"/>
    <property type="evidence" value="ECO:0007669"/>
    <property type="project" value="UniProtKB-UniRule"/>
</dbReference>
<dbReference type="GO" id="GO:0009097">
    <property type="term" value="P:isoleucine biosynthetic process"/>
    <property type="evidence" value="ECO:0007669"/>
    <property type="project" value="UniProtKB-UniRule"/>
</dbReference>
<dbReference type="GO" id="GO:0009099">
    <property type="term" value="P:L-valine biosynthetic process"/>
    <property type="evidence" value="ECO:0007669"/>
    <property type="project" value="UniProtKB-UniRule"/>
</dbReference>
<dbReference type="FunFam" id="3.50.30.80:FF:000001">
    <property type="entry name" value="Dihydroxy-acid dehydratase"/>
    <property type="match status" value="1"/>
</dbReference>
<dbReference type="Gene3D" id="3.50.30.80">
    <property type="entry name" value="IlvD/EDD C-terminal domain-like"/>
    <property type="match status" value="1"/>
</dbReference>
<dbReference type="HAMAP" id="MF_00012">
    <property type="entry name" value="IlvD"/>
    <property type="match status" value="1"/>
</dbReference>
<dbReference type="InterPro" id="IPR050165">
    <property type="entry name" value="DHAD_IlvD/Edd"/>
</dbReference>
<dbReference type="InterPro" id="IPR042096">
    <property type="entry name" value="Dihydro-acid_dehy_C"/>
</dbReference>
<dbReference type="InterPro" id="IPR004404">
    <property type="entry name" value="DihydroxyA_deHydtase"/>
</dbReference>
<dbReference type="InterPro" id="IPR020558">
    <property type="entry name" value="DiOHA_6PGluconate_deHydtase_CS"/>
</dbReference>
<dbReference type="InterPro" id="IPR056740">
    <property type="entry name" value="ILV_EDD_C"/>
</dbReference>
<dbReference type="InterPro" id="IPR000581">
    <property type="entry name" value="ILV_EDD_N"/>
</dbReference>
<dbReference type="InterPro" id="IPR037237">
    <property type="entry name" value="IlvD/EDD_N"/>
</dbReference>
<dbReference type="NCBIfam" id="TIGR00110">
    <property type="entry name" value="ilvD"/>
    <property type="match status" value="1"/>
</dbReference>
<dbReference type="NCBIfam" id="NF002068">
    <property type="entry name" value="PRK00911.1"/>
    <property type="match status" value="1"/>
</dbReference>
<dbReference type="PANTHER" id="PTHR21000">
    <property type="entry name" value="DIHYDROXY-ACID DEHYDRATASE DAD"/>
    <property type="match status" value="1"/>
</dbReference>
<dbReference type="PANTHER" id="PTHR21000:SF5">
    <property type="entry name" value="DIHYDROXY-ACID DEHYDRATASE, MITOCHONDRIAL"/>
    <property type="match status" value="1"/>
</dbReference>
<dbReference type="Pfam" id="PF24877">
    <property type="entry name" value="ILV_EDD_C"/>
    <property type="match status" value="1"/>
</dbReference>
<dbReference type="Pfam" id="PF00920">
    <property type="entry name" value="ILVD_EDD_N"/>
    <property type="match status" value="1"/>
</dbReference>
<dbReference type="SUPFAM" id="SSF143975">
    <property type="entry name" value="IlvD/EDD N-terminal domain-like"/>
    <property type="match status" value="1"/>
</dbReference>
<dbReference type="SUPFAM" id="SSF52016">
    <property type="entry name" value="LeuD/IlvD-like"/>
    <property type="match status" value="1"/>
</dbReference>
<dbReference type="PROSITE" id="PS00886">
    <property type="entry name" value="ILVD_EDD_1"/>
    <property type="match status" value="1"/>
</dbReference>
<dbReference type="PROSITE" id="PS00887">
    <property type="entry name" value="ILVD_EDD_2"/>
    <property type="match status" value="1"/>
</dbReference>
<organism>
    <name type="scientific">Tropheryma whipplei (strain TW08/27)</name>
    <name type="common">Whipple's bacillus</name>
    <dbReference type="NCBI Taxonomy" id="218496"/>
    <lineage>
        <taxon>Bacteria</taxon>
        <taxon>Bacillati</taxon>
        <taxon>Actinomycetota</taxon>
        <taxon>Actinomycetes</taxon>
        <taxon>Micrococcales</taxon>
        <taxon>Tropherymataceae</taxon>
        <taxon>Tropheryma</taxon>
    </lineage>
</organism>
<sequence length="569" mass="59724">MFMSSDANACEIDIKPRSRVVTHGIEATTSRGMLRAVGMGDADWEKPQIGIASSWNNITPCNLSLDRLAQGAREGVHAAGGYPLQFCTISVSDGISMGHEGMHFSLVSREVITDSVETVLMAEALDGVVLLAGCDKSLPGMLMAAARLDVSAVFLYAGSIAPGYVTLKCGESKEVTIIDSFEAVGAYKAGLIDQDDLGRIERAICPGEGACGGMYTANTMASVAEALGMSLLGSASPPSADRRRDVYAHKSGEAVVELLKRGITARDILTKEAFENAIAVVMALGGSTNAVLHLLAIAHEAHVPLTIDDFNKIGNRVPHIADLKPFGRYVMNDVDRVGGIPVVINALMREGFIHGDVITVSGRTMAEEISDINPGLPDGKVIHSFSSPLHPTGGIKVLKGTLAPDGAVAKTAGFDTVVFQGPAMVFDRERAAMDALSAGNIKKGSVIVIRYEGPKGGPGMREMLAITAAIKGSGLGKDVLLLTDGRFSGGTTGLCIGHIAPEAVDLGPIAFVQDGDIIRVDIEKSSIDVLVDEKQLRARHLTPPPPRYTSGVLSKYSKLVKSASLGAIT</sequence>
<accession>Q83HI6</accession>
<gene>
    <name evidence="1" type="primary">ilvD</name>
    <name type="ordered locus">TW568</name>
</gene>
<protein>
    <recommendedName>
        <fullName evidence="1">Dihydroxy-acid dehydratase</fullName>
        <shortName evidence="1">DAD</shortName>
        <ecNumber evidence="1">4.2.1.9</ecNumber>
    </recommendedName>
</protein>
<feature type="chain" id="PRO_0000103523" description="Dihydroxy-acid dehydratase">
    <location>
        <begin position="1"/>
        <end position="569"/>
    </location>
</feature>
<feature type="active site" description="Proton acceptor" evidence="1">
    <location>
        <position position="488"/>
    </location>
</feature>
<feature type="binding site" evidence="1">
    <location>
        <position position="61"/>
    </location>
    <ligand>
        <name>[2Fe-2S] cluster</name>
        <dbReference type="ChEBI" id="CHEBI:190135"/>
    </ligand>
</feature>
<feature type="binding site" evidence="1">
    <location>
        <position position="93"/>
    </location>
    <ligand>
        <name>Mg(2+)</name>
        <dbReference type="ChEBI" id="CHEBI:18420"/>
    </ligand>
</feature>
<feature type="binding site" evidence="1">
    <location>
        <position position="134"/>
    </location>
    <ligand>
        <name>[2Fe-2S] cluster</name>
        <dbReference type="ChEBI" id="CHEBI:190135"/>
    </ligand>
</feature>
<feature type="binding site" evidence="1">
    <location>
        <position position="135"/>
    </location>
    <ligand>
        <name>Mg(2+)</name>
        <dbReference type="ChEBI" id="CHEBI:18420"/>
    </ligand>
</feature>
<feature type="binding site" description="via carbamate group" evidence="1">
    <location>
        <position position="136"/>
    </location>
    <ligand>
        <name>Mg(2+)</name>
        <dbReference type="ChEBI" id="CHEBI:18420"/>
    </ligand>
</feature>
<feature type="binding site" evidence="1">
    <location>
        <position position="211"/>
    </location>
    <ligand>
        <name>[2Fe-2S] cluster</name>
        <dbReference type="ChEBI" id="CHEBI:190135"/>
    </ligand>
</feature>
<feature type="binding site" evidence="1">
    <location>
        <position position="462"/>
    </location>
    <ligand>
        <name>Mg(2+)</name>
        <dbReference type="ChEBI" id="CHEBI:18420"/>
    </ligand>
</feature>
<feature type="modified residue" description="N6-carboxylysine" evidence="1">
    <location>
        <position position="136"/>
    </location>
</feature>